<protein>
    <recommendedName>
        <fullName evidence="2">Uncharacterized protein Rv2302</fullName>
    </recommendedName>
</protein>
<accession>P9WLD5</accession>
<accession>L0T979</accession>
<accession>P64983</accession>
<accession>Q50663</accession>
<comment type="biophysicochemical properties">
    <temperatureDependence>
        <text evidence="1">Is rather robust, being able to refold back into its native structure after being heated to 80 degrees Celsius.</text>
    </temperatureDependence>
</comment>
<comment type="subunit">
    <text evidence="1">Monomer.</text>
</comment>
<comment type="similarity">
    <text evidence="2">To M.leprae U650M.</text>
</comment>
<organism>
    <name type="scientific">Mycobacterium tuberculosis (strain ATCC 25618 / H37Rv)</name>
    <dbReference type="NCBI Taxonomy" id="83332"/>
    <lineage>
        <taxon>Bacteria</taxon>
        <taxon>Bacillati</taxon>
        <taxon>Actinomycetota</taxon>
        <taxon>Actinomycetes</taxon>
        <taxon>Mycobacteriales</taxon>
        <taxon>Mycobacteriaceae</taxon>
        <taxon>Mycobacterium</taxon>
        <taxon>Mycobacterium tuberculosis complex</taxon>
    </lineage>
</organism>
<name>Y2302_MYCTU</name>
<dbReference type="EMBL" id="AL123456">
    <property type="protein sequence ID" value="CCP45084.1"/>
    <property type="molecule type" value="Genomic_DNA"/>
</dbReference>
<dbReference type="PIR" id="B70734">
    <property type="entry name" value="B70734"/>
</dbReference>
<dbReference type="RefSeq" id="NP_216818.1">
    <property type="nucleotide sequence ID" value="NC_000962.3"/>
</dbReference>
<dbReference type="RefSeq" id="WP_003411866.1">
    <property type="nucleotide sequence ID" value="NZ_NVQJ01000012.1"/>
</dbReference>
<dbReference type="PDB" id="2A7Y">
    <property type="method" value="NMR"/>
    <property type="chains" value="A=1-80"/>
</dbReference>
<dbReference type="PDBsum" id="2A7Y"/>
<dbReference type="BMRB" id="P9WLD5"/>
<dbReference type="SMR" id="P9WLD5"/>
<dbReference type="STRING" id="83332.Rv2302"/>
<dbReference type="PaxDb" id="83332-Rv2302"/>
<dbReference type="DNASU" id="885154"/>
<dbReference type="GeneID" id="885154"/>
<dbReference type="KEGG" id="mtu:Rv2302"/>
<dbReference type="KEGG" id="mtv:RVBD_2302"/>
<dbReference type="TubercuList" id="Rv2302"/>
<dbReference type="eggNOG" id="COG2905">
    <property type="taxonomic scope" value="Bacteria"/>
</dbReference>
<dbReference type="InParanoid" id="P9WLD5"/>
<dbReference type="OrthoDB" id="4828144at2"/>
<dbReference type="PhylomeDB" id="P9WLD5"/>
<dbReference type="EvolutionaryTrace" id="P9WLD5"/>
<dbReference type="Proteomes" id="UP000001584">
    <property type="component" value="Chromosome"/>
</dbReference>
<dbReference type="GO" id="GO:0009274">
    <property type="term" value="C:peptidoglycan-based cell wall"/>
    <property type="evidence" value="ECO:0007005"/>
    <property type="project" value="MTBBASE"/>
</dbReference>
<dbReference type="Gene3D" id="2.30.30.440">
    <property type="entry name" value="Domain of unknown function DUF1918"/>
    <property type="match status" value="1"/>
</dbReference>
<dbReference type="InterPro" id="IPR015035">
    <property type="entry name" value="DUF1918"/>
</dbReference>
<dbReference type="Pfam" id="PF08940">
    <property type="entry name" value="DUF1918"/>
    <property type="match status" value="1"/>
</dbReference>
<dbReference type="SUPFAM" id="SSF50118">
    <property type="entry name" value="Cell growth inhibitor/plasmid maintenance toxic component"/>
    <property type="match status" value="1"/>
</dbReference>
<feature type="chain" id="PRO_0000104011" description="Uncharacterized protein Rv2302">
    <location>
        <begin position="1"/>
        <end position="80"/>
    </location>
</feature>
<feature type="strand" evidence="4">
    <location>
        <begin position="7"/>
        <end position="12"/>
    </location>
</feature>
<feature type="turn" evidence="4">
    <location>
        <begin position="14"/>
        <end position="16"/>
    </location>
</feature>
<feature type="strand" evidence="4">
    <location>
        <begin position="20"/>
        <end position="27"/>
    </location>
</feature>
<feature type="strand" evidence="4">
    <location>
        <begin position="31"/>
        <end position="33"/>
    </location>
</feature>
<feature type="strand" evidence="4">
    <location>
        <begin position="37"/>
        <end position="41"/>
    </location>
</feature>
<feature type="turn" evidence="4">
    <location>
        <begin position="42"/>
        <end position="45"/>
    </location>
</feature>
<feature type="strand" evidence="4">
    <location>
        <begin position="46"/>
        <end position="50"/>
    </location>
</feature>
<feature type="strand" evidence="4">
    <location>
        <begin position="57"/>
        <end position="59"/>
    </location>
</feature>
<feature type="helix" evidence="4">
    <location>
        <begin position="61"/>
        <end position="75"/>
    </location>
</feature>
<proteinExistence type="evidence at protein level"/>
<reference key="1">
    <citation type="journal article" date="1998" name="Nature">
        <title>Deciphering the biology of Mycobacterium tuberculosis from the complete genome sequence.</title>
        <authorList>
            <person name="Cole S.T."/>
            <person name="Brosch R."/>
            <person name="Parkhill J."/>
            <person name="Garnier T."/>
            <person name="Churcher C.M."/>
            <person name="Harris D.E."/>
            <person name="Gordon S.V."/>
            <person name="Eiglmeier K."/>
            <person name="Gas S."/>
            <person name="Barry C.E. III"/>
            <person name="Tekaia F."/>
            <person name="Badcock K."/>
            <person name="Basham D."/>
            <person name="Brown D."/>
            <person name="Chillingworth T."/>
            <person name="Connor R."/>
            <person name="Davies R.M."/>
            <person name="Devlin K."/>
            <person name="Feltwell T."/>
            <person name="Gentles S."/>
            <person name="Hamlin N."/>
            <person name="Holroyd S."/>
            <person name="Hornsby T."/>
            <person name="Jagels K."/>
            <person name="Krogh A."/>
            <person name="McLean J."/>
            <person name="Moule S."/>
            <person name="Murphy L.D."/>
            <person name="Oliver S."/>
            <person name="Osborne J."/>
            <person name="Quail M.A."/>
            <person name="Rajandream M.A."/>
            <person name="Rogers J."/>
            <person name="Rutter S."/>
            <person name="Seeger K."/>
            <person name="Skelton S."/>
            <person name="Squares S."/>
            <person name="Squares R."/>
            <person name="Sulston J.E."/>
            <person name="Taylor K."/>
            <person name="Whitehead S."/>
            <person name="Barrell B.G."/>
        </authorList>
    </citation>
    <scope>NUCLEOTIDE SEQUENCE [LARGE SCALE GENOMIC DNA]</scope>
    <source>
        <strain>ATCC 25618 / H37Rv</strain>
    </source>
</reference>
<reference key="2">
    <citation type="journal article" date="2011" name="Mol. Cell. Proteomics">
        <title>Proteogenomic analysis of Mycobacterium tuberculosis by high resolution mass spectrometry.</title>
        <authorList>
            <person name="Kelkar D.S."/>
            <person name="Kumar D."/>
            <person name="Kumar P."/>
            <person name="Balakrishnan L."/>
            <person name="Muthusamy B."/>
            <person name="Yadav A.K."/>
            <person name="Shrivastava P."/>
            <person name="Marimuthu A."/>
            <person name="Anand S."/>
            <person name="Sundaram H."/>
            <person name="Kingsbury R."/>
            <person name="Harsha H.C."/>
            <person name="Nair B."/>
            <person name="Prasad T.S."/>
            <person name="Chauhan D.S."/>
            <person name="Katoch K."/>
            <person name="Katoch V.M."/>
            <person name="Kumar P."/>
            <person name="Chaerkady R."/>
            <person name="Ramachandran S."/>
            <person name="Dash D."/>
            <person name="Pandey A."/>
        </authorList>
    </citation>
    <scope>IDENTIFICATION BY MASS SPECTROMETRY [LARGE SCALE ANALYSIS]</scope>
    <source>
        <strain>ATCC 25618 / H37Rv</strain>
    </source>
</reference>
<reference evidence="3" key="3">
    <citation type="journal article" date="2006" name="J. Bacteriol.">
        <title>Solution structure of the conserved hypothetical protein Rv2302 from Mycobacterium tuberculosis.</title>
        <authorList>
            <person name="Buchko G.W."/>
            <person name="Kim C.Y."/>
            <person name="Terwilliger T.C."/>
            <person name="Kennedy M.A."/>
        </authorList>
    </citation>
    <scope>STRUCTURE BY NMR</scope>
    <scope>BIOPHYSICOCHEMICAL PROPERTIES</scope>
    <scope>SUBUNIT</scope>
</reference>
<keyword id="KW-0002">3D-structure</keyword>
<keyword id="KW-1185">Reference proteome</keyword>
<evidence type="ECO:0000269" key="1">
    <source>
    </source>
</evidence>
<evidence type="ECO:0000305" key="2"/>
<evidence type="ECO:0007744" key="3">
    <source>
        <dbReference type="PDB" id="2A7Y"/>
    </source>
</evidence>
<evidence type="ECO:0007829" key="4">
    <source>
        <dbReference type="PDB" id="2A7Y"/>
    </source>
</evidence>
<gene>
    <name type="ordered locus">Rv2302</name>
    <name type="ORF">MTCY339.07c</name>
</gene>
<sequence length="80" mass="8591">MHAKVGDYLVVKGTTTERHDQHAEIIEVRSADGSPPYVVRWLVNGHETTVYPGSDAVVVTATEHAEAEKRAAARAGHAAT</sequence>